<accession>Q9DBV4</accession>
<accession>Q76M97</accession>
<accession>Q920S7</accession>
<dbReference type="EMBL" id="AB052097">
    <property type="protein sequence ID" value="BAD05133.1"/>
    <property type="molecule type" value="mRNA"/>
</dbReference>
<dbReference type="EMBL" id="AB040488">
    <property type="protein sequence ID" value="BAB68501.1"/>
    <property type="molecule type" value="mRNA"/>
</dbReference>
<dbReference type="EMBL" id="AK004732">
    <property type="protein sequence ID" value="BAB23514.1"/>
    <property type="molecule type" value="mRNA"/>
</dbReference>
<dbReference type="EMBL" id="AL670236">
    <property type="status" value="NOT_ANNOTATED_CDS"/>
    <property type="molecule type" value="Genomic_DNA"/>
</dbReference>
<dbReference type="EMBL" id="BC026438">
    <property type="protein sequence ID" value="AAH26438.1"/>
    <property type="molecule type" value="mRNA"/>
</dbReference>
<dbReference type="CCDS" id="CCDS19044.1"/>
<dbReference type="RefSeq" id="NP_077225.4">
    <property type="nucleotide sequence ID" value="NM_024263.4"/>
</dbReference>
<dbReference type="PDB" id="6JO7">
    <property type="method" value="X-ray"/>
    <property type="resolution" value="2.40 A"/>
    <property type="chains" value="A/B=23-291"/>
</dbReference>
<dbReference type="PDB" id="6NK3">
    <property type="method" value="X-ray"/>
    <property type="resolution" value="2.20 A"/>
    <property type="chains" value="A/B=23-296"/>
</dbReference>
<dbReference type="PDB" id="6NK6">
    <property type="method" value="EM"/>
    <property type="resolution" value="4.06 A"/>
    <property type="chains" value="M/N/O/P=32-299"/>
</dbReference>
<dbReference type="PDB" id="6NK7">
    <property type="method" value="EM"/>
    <property type="resolution" value="4.99 A"/>
    <property type="chains" value="N=32-292"/>
</dbReference>
<dbReference type="PDB" id="8EWF">
    <property type="method" value="EM"/>
    <property type="resolution" value="3.92 A"/>
    <property type="chains" value="E=32-65, E=197-294"/>
</dbReference>
<dbReference type="PDB" id="8SQN">
    <property type="method" value="EM"/>
    <property type="resolution" value="3.89 A"/>
    <property type="chains" value="A=32-65, A=197-294"/>
</dbReference>
<dbReference type="PDBsum" id="6JO7"/>
<dbReference type="PDBsum" id="6NK3"/>
<dbReference type="PDBsum" id="6NK6"/>
<dbReference type="PDBsum" id="6NK7"/>
<dbReference type="PDBsum" id="8EWF"/>
<dbReference type="PDBsum" id="8SQN"/>
<dbReference type="EMDB" id="EMD-9394"/>
<dbReference type="EMDB" id="EMD-9395"/>
<dbReference type="SMR" id="Q9DBV4"/>
<dbReference type="BioGRID" id="217001">
    <property type="interactions" value="6"/>
</dbReference>
<dbReference type="FunCoup" id="Q9DBV4">
    <property type="interactions" value="90"/>
</dbReference>
<dbReference type="STRING" id="10090.ENSMUSP00000030947"/>
<dbReference type="GlyConnect" id="2503">
    <property type="glycosylation" value="1 N-Linked glycan (1 site)"/>
</dbReference>
<dbReference type="GlyCosmos" id="Q9DBV4">
    <property type="glycosylation" value="2 sites, 1 glycan"/>
</dbReference>
<dbReference type="GlyGen" id="Q9DBV4">
    <property type="glycosylation" value="2 sites, 3 N-linked glycans (2 sites)"/>
</dbReference>
<dbReference type="iPTMnet" id="Q9DBV4"/>
<dbReference type="PhosphoSitePlus" id="Q9DBV4"/>
<dbReference type="SwissPalm" id="Q9DBV4"/>
<dbReference type="PaxDb" id="10090-ENSMUSP00000030947"/>
<dbReference type="ProteomicsDB" id="293591"/>
<dbReference type="Pumba" id="Q9DBV4"/>
<dbReference type="Antibodypedia" id="66422">
    <property type="antibodies" value="15 antibodies from 8 providers"/>
</dbReference>
<dbReference type="Ensembl" id="ENSMUST00000030947.4">
    <property type="protein sequence ID" value="ENSMUSP00000030947.4"/>
    <property type="gene ID" value="ENSMUSG00000029070.10"/>
</dbReference>
<dbReference type="GeneID" id="74761"/>
<dbReference type="KEGG" id="mmu:74761"/>
<dbReference type="UCSC" id="uc012dqy.1">
    <property type="organism name" value="mouse"/>
</dbReference>
<dbReference type="AGR" id="MGI:1922011"/>
<dbReference type="CTD" id="54587"/>
<dbReference type="MGI" id="MGI:1922011">
    <property type="gene designation" value="Mxra8"/>
</dbReference>
<dbReference type="VEuPathDB" id="HostDB:ENSMUSG00000029070"/>
<dbReference type="eggNOG" id="ENOG502QRZ7">
    <property type="taxonomic scope" value="Eukaryota"/>
</dbReference>
<dbReference type="GeneTree" id="ENSGT00390000001509"/>
<dbReference type="InParanoid" id="Q9DBV4"/>
<dbReference type="OMA" id="HIPVACL"/>
<dbReference type="OrthoDB" id="9832369at2759"/>
<dbReference type="PhylomeDB" id="Q9DBV4"/>
<dbReference type="TreeFam" id="TF332884"/>
<dbReference type="Reactome" id="R-MMU-381426">
    <property type="pathway name" value="Regulation of Insulin-like Growth Factor (IGF) transport and uptake by Insulin-like Growth Factor Binding Proteins (IGFBPs)"/>
</dbReference>
<dbReference type="Reactome" id="R-MMU-8957275">
    <property type="pathway name" value="Post-translational protein phosphorylation"/>
</dbReference>
<dbReference type="BioGRID-ORCS" id="74761">
    <property type="hits" value="2 hits in 78 CRISPR screens"/>
</dbReference>
<dbReference type="PRO" id="PR:Q9DBV4"/>
<dbReference type="Proteomes" id="UP000000589">
    <property type="component" value="Chromosome 4"/>
</dbReference>
<dbReference type="RNAct" id="Q9DBV4">
    <property type="molecule type" value="protein"/>
</dbReference>
<dbReference type="Bgee" id="ENSMUSG00000029070">
    <property type="expression patterns" value="Expressed in vault of skull and 254 other cell types or tissues"/>
</dbReference>
<dbReference type="ExpressionAtlas" id="Q9DBV4">
    <property type="expression patterns" value="baseline and differential"/>
</dbReference>
<dbReference type="GO" id="GO:0005923">
    <property type="term" value="C:bicellular tight junction"/>
    <property type="evidence" value="ECO:0007669"/>
    <property type="project" value="UniProtKB-SubCell"/>
</dbReference>
<dbReference type="GO" id="GO:0009986">
    <property type="term" value="C:cell surface"/>
    <property type="evidence" value="ECO:0000314"/>
    <property type="project" value="UniProtKB"/>
</dbReference>
<dbReference type="GO" id="GO:0060170">
    <property type="term" value="C:ciliary membrane"/>
    <property type="evidence" value="ECO:0007669"/>
    <property type="project" value="UniProtKB-SubCell"/>
</dbReference>
<dbReference type="GO" id="GO:0005737">
    <property type="term" value="C:cytoplasm"/>
    <property type="evidence" value="ECO:0007669"/>
    <property type="project" value="UniProtKB-SubCell"/>
</dbReference>
<dbReference type="GO" id="GO:0005634">
    <property type="term" value="C:nucleus"/>
    <property type="evidence" value="ECO:0007669"/>
    <property type="project" value="UniProtKB-SubCell"/>
</dbReference>
<dbReference type="GO" id="GO:0007155">
    <property type="term" value="P:cell adhesion"/>
    <property type="evidence" value="ECO:0007669"/>
    <property type="project" value="UniProtKB-KW"/>
</dbReference>
<dbReference type="GO" id="GO:0060857">
    <property type="term" value="P:establishment of glial blood-brain barrier"/>
    <property type="evidence" value="ECO:0000270"/>
    <property type="project" value="UniProtKB"/>
</dbReference>
<dbReference type="FunFam" id="2.60.40.10:FF:000806">
    <property type="entry name" value="Matrix remodeling associated 8"/>
    <property type="match status" value="2"/>
</dbReference>
<dbReference type="Gene3D" id="2.60.40.10">
    <property type="entry name" value="Immunoglobulins"/>
    <property type="match status" value="2"/>
</dbReference>
<dbReference type="InterPro" id="IPR007110">
    <property type="entry name" value="Ig-like_dom"/>
</dbReference>
<dbReference type="InterPro" id="IPR036179">
    <property type="entry name" value="Ig-like_dom_sf"/>
</dbReference>
<dbReference type="InterPro" id="IPR013783">
    <property type="entry name" value="Ig-like_fold"/>
</dbReference>
<dbReference type="InterPro" id="IPR003599">
    <property type="entry name" value="Ig_sub"/>
</dbReference>
<dbReference type="InterPro" id="IPR013106">
    <property type="entry name" value="Ig_V-set"/>
</dbReference>
<dbReference type="InterPro" id="IPR042472">
    <property type="entry name" value="MXRA8"/>
</dbReference>
<dbReference type="PANTHER" id="PTHR44793">
    <property type="entry name" value="MATRIX REMODELING-ASSOCIATED PROTEIN 8"/>
    <property type="match status" value="1"/>
</dbReference>
<dbReference type="PANTHER" id="PTHR44793:SF1">
    <property type="entry name" value="MATRIX REMODELING-ASSOCIATED PROTEIN 8"/>
    <property type="match status" value="1"/>
</dbReference>
<dbReference type="Pfam" id="PF07686">
    <property type="entry name" value="V-set"/>
    <property type="match status" value="2"/>
</dbReference>
<dbReference type="SMART" id="SM00409">
    <property type="entry name" value="IG"/>
    <property type="match status" value="2"/>
</dbReference>
<dbReference type="SMART" id="SM00406">
    <property type="entry name" value="IGv"/>
    <property type="match status" value="2"/>
</dbReference>
<dbReference type="SUPFAM" id="SSF48726">
    <property type="entry name" value="Immunoglobulin"/>
    <property type="match status" value="2"/>
</dbReference>
<dbReference type="PROSITE" id="PS50835">
    <property type="entry name" value="IG_LIKE"/>
    <property type="match status" value="2"/>
</dbReference>
<name>MXRA8_MOUSE</name>
<proteinExistence type="evidence at protein level"/>
<evidence type="ECO:0000250" key="1">
    <source>
        <dbReference type="UniProtKB" id="Q5XI43"/>
    </source>
</evidence>
<evidence type="ECO:0000250" key="2">
    <source>
        <dbReference type="UniProtKB" id="Q9BRK3"/>
    </source>
</evidence>
<evidence type="ECO:0000255" key="3"/>
<evidence type="ECO:0000255" key="4">
    <source>
        <dbReference type="PROSITE-ProRule" id="PRU00114"/>
    </source>
</evidence>
<evidence type="ECO:0000256" key="5">
    <source>
        <dbReference type="SAM" id="MobiDB-lite"/>
    </source>
</evidence>
<evidence type="ECO:0000269" key="6">
    <source>
    </source>
</evidence>
<evidence type="ECO:0000269" key="7">
    <source>
    </source>
</evidence>
<evidence type="ECO:0000269" key="8">
    <source>
    </source>
</evidence>
<evidence type="ECO:0000269" key="9">
    <source>
    </source>
</evidence>
<evidence type="ECO:0000303" key="10">
    <source>
    </source>
</evidence>
<evidence type="ECO:0000303" key="11">
    <source>
    </source>
</evidence>
<evidence type="ECO:0000305" key="12"/>
<evidence type="ECO:0000305" key="13">
    <source>
    </source>
</evidence>
<evidence type="ECO:0000312" key="14">
    <source>
        <dbReference type="EMBL" id="BAB68501.1"/>
    </source>
</evidence>
<evidence type="ECO:0000312" key="15">
    <source>
        <dbReference type="MGI" id="MGI:1922011"/>
    </source>
</evidence>
<evidence type="ECO:0007829" key="16">
    <source>
        <dbReference type="PDB" id="6JO7"/>
    </source>
</evidence>
<evidence type="ECO:0007829" key="17">
    <source>
        <dbReference type="PDB" id="6NK3"/>
    </source>
</evidence>
<feature type="signal peptide" evidence="3">
    <location>
        <begin position="1"/>
        <end position="19"/>
    </location>
</feature>
<feature type="chain" id="PRO_0000298666" description="Matrix remodeling-associated protein 8">
    <location>
        <begin position="20"/>
        <end position="442"/>
    </location>
</feature>
<feature type="topological domain" description="Extracellular" evidence="3">
    <location>
        <begin position="20"/>
        <end position="340"/>
    </location>
</feature>
<feature type="transmembrane region" description="Helical" evidence="3">
    <location>
        <begin position="341"/>
        <end position="361"/>
    </location>
</feature>
<feature type="topological domain" description="Cytoplasmic" evidence="3">
    <location>
        <begin position="362"/>
        <end position="442"/>
    </location>
</feature>
<feature type="domain" description="Ig-like V-type 1">
    <location>
        <begin position="25"/>
        <end position="156"/>
    </location>
</feature>
<feature type="domain" description="Ig-like V-type 2">
    <location>
        <begin position="159"/>
        <end position="291"/>
    </location>
</feature>
<feature type="region of interest" description="Disordered" evidence="5">
    <location>
        <begin position="296"/>
        <end position="319"/>
    </location>
</feature>
<feature type="short sequence motif" description="RGD 1" evidence="13">
    <location>
        <begin position="128"/>
        <end position="130"/>
    </location>
</feature>
<feature type="short sequence motif" description="RGD 2" evidence="13">
    <location>
        <begin position="251"/>
        <end position="253"/>
    </location>
</feature>
<feature type="site" description="Cleavage" evidence="1">
    <location>
        <begin position="324"/>
        <end position="325"/>
    </location>
</feature>
<feature type="modified residue" description="Phosphoserine" evidence="2">
    <location>
        <position position="227"/>
    </location>
</feature>
<feature type="glycosylation site" description="N-linked (GlcNAc...) asparagine" evidence="3">
    <location>
        <position position="118"/>
    </location>
</feature>
<feature type="glycosylation site" description="N-linked (GlcNAc...) asparagine" evidence="3">
    <location>
        <position position="305"/>
    </location>
</feature>
<feature type="disulfide bond" evidence="4">
    <location>
        <begin position="53"/>
        <end position="136"/>
    </location>
</feature>
<feature type="disulfide bond" evidence="4">
    <location>
        <begin position="185"/>
        <end position="271"/>
    </location>
</feature>
<feature type="mutagenesis site" description="No significant effect on integrin ITGAV:ITGB3 binding." evidence="7">
    <original>D</original>
    <variation>E</variation>
    <location>
        <position position="130"/>
    </location>
</feature>
<feature type="mutagenesis site" description="Reduced integrin ITGAV:ITGB3 binding." evidence="7">
    <original>D</original>
    <variation>E</variation>
    <location>
        <position position="253"/>
    </location>
</feature>
<feature type="sequence conflict" description="In Ref. 1; BAD05133, 2; BAB68501 and 5; AAH26438." evidence="12" ref="1 2 5">
    <original>S</original>
    <variation>N</variation>
    <location>
        <position position="33"/>
    </location>
</feature>
<feature type="sequence conflict" description="In Ref. 1; BAD05133." evidence="12" ref="1">
    <original>G</original>
    <variation>D</variation>
    <location>
        <position position="79"/>
    </location>
</feature>
<feature type="sequence conflict" description="In Ref. 1; BAD05133, 2; BAB68501 and 5; AAH26438." evidence="12" ref="1 2 5">
    <original>D</original>
    <variation>E</variation>
    <location>
        <position position="127"/>
    </location>
</feature>
<feature type="sequence conflict" description="In Ref. 1; BAD05133." evidence="12" ref="1">
    <original>E</original>
    <variation>D</variation>
    <location>
        <position position="157"/>
    </location>
</feature>
<feature type="sequence conflict" description="In Ref. 1; BAD05133, 2; BAB68501 and 5; AAH26438." evidence="12" ref="1 2 5">
    <original>Y</original>
    <variation>H</variation>
    <location>
        <position position="364"/>
    </location>
</feature>
<feature type="strand" evidence="17">
    <location>
        <begin position="34"/>
        <end position="44"/>
    </location>
</feature>
<feature type="strand" evidence="17">
    <location>
        <begin position="49"/>
        <end position="51"/>
    </location>
</feature>
<feature type="helix" evidence="17">
    <location>
        <begin position="56"/>
        <end position="58"/>
    </location>
</feature>
<feature type="turn" evidence="17">
    <location>
        <begin position="65"/>
        <end position="68"/>
    </location>
</feature>
<feature type="strand" evidence="17">
    <location>
        <begin position="70"/>
        <end position="77"/>
    </location>
</feature>
<feature type="strand" evidence="16">
    <location>
        <begin position="79"/>
        <end position="82"/>
    </location>
</feature>
<feature type="strand" evidence="17">
    <location>
        <begin position="85"/>
        <end position="91"/>
    </location>
</feature>
<feature type="strand" evidence="17">
    <location>
        <begin position="97"/>
        <end position="100"/>
    </location>
</feature>
<feature type="helix" evidence="17">
    <location>
        <begin position="101"/>
        <end position="103"/>
    </location>
</feature>
<feature type="turn" evidence="17">
    <location>
        <begin position="104"/>
        <end position="106"/>
    </location>
</feature>
<feature type="strand" evidence="17">
    <location>
        <begin position="107"/>
        <end position="109"/>
    </location>
</feature>
<feature type="helix" evidence="17">
    <location>
        <begin position="113"/>
        <end position="116"/>
    </location>
</feature>
<feature type="strand" evidence="17">
    <location>
        <begin position="121"/>
        <end position="125"/>
    </location>
</feature>
<feature type="helix" evidence="17">
    <location>
        <begin position="128"/>
        <end position="130"/>
    </location>
</feature>
<feature type="strand" evidence="17">
    <location>
        <begin position="132"/>
        <end position="140"/>
    </location>
</feature>
<feature type="turn" evidence="17">
    <location>
        <begin position="141"/>
        <end position="144"/>
    </location>
</feature>
<feature type="strand" evidence="17">
    <location>
        <begin position="145"/>
        <end position="157"/>
    </location>
</feature>
<feature type="helix" evidence="17">
    <location>
        <begin position="159"/>
        <end position="161"/>
    </location>
</feature>
<feature type="strand" evidence="17">
    <location>
        <begin position="164"/>
        <end position="166"/>
    </location>
</feature>
<feature type="strand" evidence="17">
    <location>
        <begin position="168"/>
        <end position="176"/>
    </location>
</feature>
<feature type="strand" evidence="17">
    <location>
        <begin position="181"/>
        <end position="183"/>
    </location>
</feature>
<feature type="turn" evidence="17">
    <location>
        <begin position="190"/>
        <end position="192"/>
    </location>
</feature>
<feature type="strand" evidence="17">
    <location>
        <begin position="203"/>
        <end position="209"/>
    </location>
</feature>
<feature type="strand" evidence="17">
    <location>
        <begin position="219"/>
        <end position="225"/>
    </location>
</feature>
<feature type="strand" evidence="17">
    <location>
        <begin position="230"/>
        <end position="232"/>
    </location>
</feature>
<feature type="helix" evidence="17">
    <location>
        <begin position="236"/>
        <end position="239"/>
    </location>
</feature>
<feature type="helix" evidence="17">
    <location>
        <begin position="248"/>
        <end position="251"/>
    </location>
</feature>
<feature type="strand" evidence="17">
    <location>
        <begin position="256"/>
        <end position="258"/>
    </location>
</feature>
<feature type="helix" evidence="17">
    <location>
        <begin position="263"/>
        <end position="265"/>
    </location>
</feature>
<feature type="strand" evidence="17">
    <location>
        <begin position="267"/>
        <end position="275"/>
    </location>
</feature>
<feature type="turn" evidence="17">
    <location>
        <begin position="276"/>
        <end position="279"/>
    </location>
</feature>
<feature type="strand" evidence="17">
    <location>
        <begin position="280"/>
        <end position="291"/>
    </location>
</feature>
<reference key="1">
    <citation type="journal article" date="2003" name="Glia">
        <title>Limitrin, a novel immunoglobulin superfamily protein localized to glia limitans formed by astrocyte endfeet.</title>
        <authorList>
            <person name="Yonezawa T."/>
            <person name="Ohtsuka A."/>
            <person name="Yoshitaka T."/>
            <person name="Hirano S."/>
            <person name="Nomoto H."/>
            <person name="Yamamoto K."/>
            <person name="Ninomiya Y."/>
        </authorList>
    </citation>
    <scope>NUCLEOTIDE SEQUENCE [MRNA]</scope>
    <scope>FUNCTION</scope>
    <scope>SUBCELLULAR LOCATION</scope>
    <scope>INDUCTION</scope>
    <scope>TISSUE SPECIFICITY</scope>
    <source>
        <tissue>Brain</tissue>
    </source>
</reference>
<reference key="2">
    <citation type="submission" date="2000-03" db="EMBL/GenBank/DDBJ databases">
        <title>Adipocyte-specific protein 3, a novel protein upregulated during adipocyte differentiation.</title>
        <authorList>
            <person name="Tsuruga H."/>
        </authorList>
    </citation>
    <scope>NUCLEOTIDE SEQUENCE [MRNA]</scope>
</reference>
<reference key="3">
    <citation type="journal article" date="2005" name="Science">
        <title>The transcriptional landscape of the mammalian genome.</title>
        <authorList>
            <person name="Carninci P."/>
            <person name="Kasukawa T."/>
            <person name="Katayama S."/>
            <person name="Gough J."/>
            <person name="Frith M.C."/>
            <person name="Maeda N."/>
            <person name="Oyama R."/>
            <person name="Ravasi T."/>
            <person name="Lenhard B."/>
            <person name="Wells C."/>
            <person name="Kodzius R."/>
            <person name="Shimokawa K."/>
            <person name="Bajic V.B."/>
            <person name="Brenner S.E."/>
            <person name="Batalov S."/>
            <person name="Forrest A.R."/>
            <person name="Zavolan M."/>
            <person name="Davis M.J."/>
            <person name="Wilming L.G."/>
            <person name="Aidinis V."/>
            <person name="Allen J.E."/>
            <person name="Ambesi-Impiombato A."/>
            <person name="Apweiler R."/>
            <person name="Aturaliya R.N."/>
            <person name="Bailey T.L."/>
            <person name="Bansal M."/>
            <person name="Baxter L."/>
            <person name="Beisel K.W."/>
            <person name="Bersano T."/>
            <person name="Bono H."/>
            <person name="Chalk A.M."/>
            <person name="Chiu K.P."/>
            <person name="Choudhary V."/>
            <person name="Christoffels A."/>
            <person name="Clutterbuck D.R."/>
            <person name="Crowe M.L."/>
            <person name="Dalla E."/>
            <person name="Dalrymple B.P."/>
            <person name="de Bono B."/>
            <person name="Della Gatta G."/>
            <person name="di Bernardo D."/>
            <person name="Down T."/>
            <person name="Engstrom P."/>
            <person name="Fagiolini M."/>
            <person name="Faulkner G."/>
            <person name="Fletcher C.F."/>
            <person name="Fukushima T."/>
            <person name="Furuno M."/>
            <person name="Futaki S."/>
            <person name="Gariboldi M."/>
            <person name="Georgii-Hemming P."/>
            <person name="Gingeras T.R."/>
            <person name="Gojobori T."/>
            <person name="Green R.E."/>
            <person name="Gustincich S."/>
            <person name="Harbers M."/>
            <person name="Hayashi Y."/>
            <person name="Hensch T.K."/>
            <person name="Hirokawa N."/>
            <person name="Hill D."/>
            <person name="Huminiecki L."/>
            <person name="Iacono M."/>
            <person name="Ikeo K."/>
            <person name="Iwama A."/>
            <person name="Ishikawa T."/>
            <person name="Jakt M."/>
            <person name="Kanapin A."/>
            <person name="Katoh M."/>
            <person name="Kawasawa Y."/>
            <person name="Kelso J."/>
            <person name="Kitamura H."/>
            <person name="Kitano H."/>
            <person name="Kollias G."/>
            <person name="Krishnan S.P."/>
            <person name="Kruger A."/>
            <person name="Kummerfeld S.K."/>
            <person name="Kurochkin I.V."/>
            <person name="Lareau L.F."/>
            <person name="Lazarevic D."/>
            <person name="Lipovich L."/>
            <person name="Liu J."/>
            <person name="Liuni S."/>
            <person name="McWilliam S."/>
            <person name="Madan Babu M."/>
            <person name="Madera M."/>
            <person name="Marchionni L."/>
            <person name="Matsuda H."/>
            <person name="Matsuzawa S."/>
            <person name="Miki H."/>
            <person name="Mignone F."/>
            <person name="Miyake S."/>
            <person name="Morris K."/>
            <person name="Mottagui-Tabar S."/>
            <person name="Mulder N."/>
            <person name="Nakano N."/>
            <person name="Nakauchi H."/>
            <person name="Ng P."/>
            <person name="Nilsson R."/>
            <person name="Nishiguchi S."/>
            <person name="Nishikawa S."/>
            <person name="Nori F."/>
            <person name="Ohara O."/>
            <person name="Okazaki Y."/>
            <person name="Orlando V."/>
            <person name="Pang K.C."/>
            <person name="Pavan W.J."/>
            <person name="Pavesi G."/>
            <person name="Pesole G."/>
            <person name="Petrovsky N."/>
            <person name="Piazza S."/>
            <person name="Reed J."/>
            <person name="Reid J.F."/>
            <person name="Ring B.Z."/>
            <person name="Ringwald M."/>
            <person name="Rost B."/>
            <person name="Ruan Y."/>
            <person name="Salzberg S.L."/>
            <person name="Sandelin A."/>
            <person name="Schneider C."/>
            <person name="Schoenbach C."/>
            <person name="Sekiguchi K."/>
            <person name="Semple C.A."/>
            <person name="Seno S."/>
            <person name="Sessa L."/>
            <person name="Sheng Y."/>
            <person name="Shibata Y."/>
            <person name="Shimada H."/>
            <person name="Shimada K."/>
            <person name="Silva D."/>
            <person name="Sinclair B."/>
            <person name="Sperling S."/>
            <person name="Stupka E."/>
            <person name="Sugiura K."/>
            <person name="Sultana R."/>
            <person name="Takenaka Y."/>
            <person name="Taki K."/>
            <person name="Tammoja K."/>
            <person name="Tan S.L."/>
            <person name="Tang S."/>
            <person name="Taylor M.S."/>
            <person name="Tegner J."/>
            <person name="Teichmann S.A."/>
            <person name="Ueda H.R."/>
            <person name="van Nimwegen E."/>
            <person name="Verardo R."/>
            <person name="Wei C.L."/>
            <person name="Yagi K."/>
            <person name="Yamanishi H."/>
            <person name="Zabarovsky E."/>
            <person name="Zhu S."/>
            <person name="Zimmer A."/>
            <person name="Hide W."/>
            <person name="Bult C."/>
            <person name="Grimmond S.M."/>
            <person name="Teasdale R.D."/>
            <person name="Liu E.T."/>
            <person name="Brusic V."/>
            <person name="Quackenbush J."/>
            <person name="Wahlestedt C."/>
            <person name="Mattick J.S."/>
            <person name="Hume D.A."/>
            <person name="Kai C."/>
            <person name="Sasaki D."/>
            <person name="Tomaru Y."/>
            <person name="Fukuda S."/>
            <person name="Kanamori-Katayama M."/>
            <person name="Suzuki M."/>
            <person name="Aoki J."/>
            <person name="Arakawa T."/>
            <person name="Iida J."/>
            <person name="Imamura K."/>
            <person name="Itoh M."/>
            <person name="Kato T."/>
            <person name="Kawaji H."/>
            <person name="Kawagashira N."/>
            <person name="Kawashima T."/>
            <person name="Kojima M."/>
            <person name="Kondo S."/>
            <person name="Konno H."/>
            <person name="Nakano K."/>
            <person name="Ninomiya N."/>
            <person name="Nishio T."/>
            <person name="Okada M."/>
            <person name="Plessy C."/>
            <person name="Shibata K."/>
            <person name="Shiraki T."/>
            <person name="Suzuki S."/>
            <person name="Tagami M."/>
            <person name="Waki K."/>
            <person name="Watahiki A."/>
            <person name="Okamura-Oho Y."/>
            <person name="Suzuki H."/>
            <person name="Kawai J."/>
            <person name="Hayashizaki Y."/>
        </authorList>
    </citation>
    <scope>NUCLEOTIDE SEQUENCE [LARGE SCALE MRNA]</scope>
    <source>
        <strain>C57BL/6J</strain>
        <tissue>Lung</tissue>
    </source>
</reference>
<reference key="4">
    <citation type="journal article" date="2009" name="PLoS Biol.">
        <title>Lineage-specific biology revealed by a finished genome assembly of the mouse.</title>
        <authorList>
            <person name="Church D.M."/>
            <person name="Goodstadt L."/>
            <person name="Hillier L.W."/>
            <person name="Zody M.C."/>
            <person name="Goldstein S."/>
            <person name="She X."/>
            <person name="Bult C.J."/>
            <person name="Agarwala R."/>
            <person name="Cherry J.L."/>
            <person name="DiCuccio M."/>
            <person name="Hlavina W."/>
            <person name="Kapustin Y."/>
            <person name="Meric P."/>
            <person name="Maglott D."/>
            <person name="Birtle Z."/>
            <person name="Marques A.C."/>
            <person name="Graves T."/>
            <person name="Zhou S."/>
            <person name="Teague B."/>
            <person name="Potamousis K."/>
            <person name="Churas C."/>
            <person name="Place M."/>
            <person name="Herschleb J."/>
            <person name="Runnheim R."/>
            <person name="Forrest D."/>
            <person name="Amos-Landgraf J."/>
            <person name="Schwartz D.C."/>
            <person name="Cheng Z."/>
            <person name="Lindblad-Toh K."/>
            <person name="Eichler E.E."/>
            <person name="Ponting C.P."/>
        </authorList>
    </citation>
    <scope>NUCLEOTIDE SEQUENCE [LARGE SCALE GENOMIC DNA]</scope>
    <source>
        <strain>C57BL/6J</strain>
    </source>
</reference>
<reference key="5">
    <citation type="journal article" date="2004" name="Genome Res.">
        <title>The status, quality, and expansion of the NIH full-length cDNA project: the Mammalian Gene Collection (MGC).</title>
        <authorList>
            <consortium name="The MGC Project Team"/>
        </authorList>
    </citation>
    <scope>NUCLEOTIDE SEQUENCE [LARGE SCALE MRNA]</scope>
    <source>
        <strain>FVB/N</strain>
        <tissue>Kidney</tissue>
    </source>
</reference>
<reference key="6">
    <citation type="journal article" date="2008" name="J. Cell. Physiol.">
        <title>DICAM, a novel dual immunoglobulin domain containing cell adhesion molecule interacts with alphavbeta3 integrin.</title>
        <authorList>
            <person name="Jung Y.K."/>
            <person name="Jin J.S."/>
            <person name="Jeong J.H."/>
            <person name="Kim H.N."/>
            <person name="Park N.R."/>
            <person name="Choi J.Y."/>
        </authorList>
    </citation>
    <scope>FUNCTION</scope>
    <scope>SUBUNIT</scope>
    <scope>SUBCELLULAR LOCATION</scope>
    <scope>TISSUE SPECIFICITY</scope>
    <scope>MOTIF RGD</scope>
    <scope>MUTAGENESIS OF ASP-130 AND ASP-253</scope>
</reference>
<reference key="7">
    <citation type="journal article" date="2012" name="J. Bone Miner. Res.">
        <title>DICAM inhibits osteoclast differentiation through attenuation of the integrin alphaVbeta3 pathway.</title>
        <authorList>
            <person name="Jung Y.K."/>
            <person name="Han S.W."/>
            <person name="Kim G.W."/>
            <person name="Jeong J.H."/>
            <person name="Kim H.J."/>
            <person name="Choi J.Y."/>
        </authorList>
    </citation>
    <scope>FUNCTION</scope>
    <scope>INTERACTION WITH ITGB3</scope>
    <scope>SUBCELLULAR LOCATION</scope>
    <scope>TISSUE SPECIFICITY</scope>
    <scope>DEVELOPMENTAL STAGE</scope>
</reference>
<reference key="8">
    <citation type="journal article" date="2010" name="Cell">
        <title>A tissue-specific atlas of mouse protein phosphorylation and expression.</title>
        <authorList>
            <person name="Huttlin E.L."/>
            <person name="Jedrychowski M.P."/>
            <person name="Elias J.E."/>
            <person name="Goswami T."/>
            <person name="Rad R."/>
            <person name="Beausoleil S.A."/>
            <person name="Villen J."/>
            <person name="Haas W."/>
            <person name="Sowa M.E."/>
            <person name="Gygi S.P."/>
        </authorList>
    </citation>
    <scope>IDENTIFICATION BY MASS SPECTROMETRY [LARGE SCALE ANALYSIS]</scope>
    <source>
        <tissue>Lung</tissue>
    </source>
</reference>
<reference key="9">
    <citation type="journal article" date="2018" name="Osteoarthritis Cartilage">
        <title>Dicam promotes proliferation and maturation of chondrocyte through Indian hedgehog signaling in primary cilia.</title>
        <authorList>
            <person name="Han S."/>
            <person name="Park H.R."/>
            <person name="Lee E.J."/>
            <person name="Jang J.A."/>
            <person name="Han M.S."/>
            <person name="Kim G.W."/>
            <person name="Jeong J.H."/>
            <person name="Choi J.Y."/>
            <person name="Beier F."/>
            <person name="Jung Y.K."/>
        </authorList>
    </citation>
    <scope>FUNCTION</scope>
    <scope>SUBCELLULAR LOCATION</scope>
    <scope>DEVELOPMENTAL STAGE</scope>
    <scope>INDUCTION</scope>
</reference>
<gene>
    <name evidence="15" type="primary">Mxra8</name>
    <name evidence="14" type="synonym">Asp3</name>
    <name evidence="11" type="synonym">Dicam</name>
</gene>
<keyword id="KW-0002">3D-structure</keyword>
<keyword id="KW-0130">Cell adhesion</keyword>
<keyword id="KW-0965">Cell junction</keyword>
<keyword id="KW-1003">Cell membrane</keyword>
<keyword id="KW-0966">Cell projection</keyword>
<keyword id="KW-0963">Cytoplasm</keyword>
<keyword id="KW-1015">Disulfide bond</keyword>
<keyword id="KW-0325">Glycoprotein</keyword>
<keyword id="KW-0393">Immunoglobulin domain</keyword>
<keyword id="KW-0472">Membrane</keyword>
<keyword id="KW-0539">Nucleus</keyword>
<keyword id="KW-0597">Phosphoprotein</keyword>
<keyword id="KW-1185">Reference proteome</keyword>
<keyword id="KW-0677">Repeat</keyword>
<keyword id="KW-0732">Signal</keyword>
<keyword id="KW-0796">Tight junction</keyword>
<keyword id="KW-0812">Transmembrane</keyword>
<keyword id="KW-1133">Transmembrane helix</keyword>
<organism>
    <name type="scientific">Mus musculus</name>
    <name type="common">Mouse</name>
    <dbReference type="NCBI Taxonomy" id="10090"/>
    <lineage>
        <taxon>Eukaryota</taxon>
        <taxon>Metazoa</taxon>
        <taxon>Chordata</taxon>
        <taxon>Craniata</taxon>
        <taxon>Vertebrata</taxon>
        <taxon>Euteleostomi</taxon>
        <taxon>Mammalia</taxon>
        <taxon>Eutheria</taxon>
        <taxon>Euarchontoglires</taxon>
        <taxon>Glires</taxon>
        <taxon>Rodentia</taxon>
        <taxon>Myomorpha</taxon>
        <taxon>Muroidea</taxon>
        <taxon>Muridae</taxon>
        <taxon>Murinae</taxon>
        <taxon>Mus</taxon>
        <taxon>Mus</taxon>
    </lineage>
</organism>
<sequence>MELLSRVLLWKLLLLQSSAVLSSGPSGTAAASSSLVSESVVSLAAGTQAVLRCQSPRMVWTQDRLHDRQRVVHWDLSGGPGSQRRRLVDMYSAGEQRVYEPRDRDRLLLSPSAFHDGNFSLLIRAVDRGDEGVYTCNLHHHYCHLDESLAVRLEVTEDPLLSRAYWDGEKEVLVVAHGAPALMTCINRAHVWTDRHLEEAQQVVHWDRQLPGVSHDRADRLLDLYASGERRAYGPPFLRDRVSVNTNAFARGDFSLRIDELERADEGIYSCHLHHHYCGLHERRVFHLQVTEPAFEPPARASPGNGSGHSSAPSPDPTLTRGHSIINVIVPEDHTHFFQQLGYVLATLLLFILLLITVVLATRYRHSGGCKTSDKKAGKSKGKDVNMVEFAVATRDQAPYRTEDIQLDYKNNILKERAELAHSPLPAKDVDLDKEFRKEYCK</sequence>
<comment type="function">
    <text evidence="2 6 7 8 9">Transmembrane protein which can modulate activity of various signaling pathways, probably via binding to integrin ITGAV:ITGB3 (PubMed:18366072, PubMed:22492581, PubMed:29702220). Mediates heterophilic cell-cell interactions in vitro (PubMed:18366072). Inhibits osteoclastogenesis downstream of TNFSF11/RANKL and CSF1, where it may function by attenuating signaling via integrin ITGB3 and MAP kinase p38 (PubMed:22492581). Plays a role in cartilage formation where it promotes proliferation and maturation of growth plate chondrocytes (PubMed:29702220). Stimulates formation of primary cilia in chondrocytes (PubMed:29702220). Enhances expression of genes involved in the hedgehog signaling pathway in chondrocytes, including the hedgehog signaling molecule IHH; may also promote signaling via the PTHLH/PTHrP pathway (PubMed:29702220). Plays a role in angiogenesis where it suppresses migration of endothelial cells and also promotes their apoptosis (By similarity). Inhibits VEGF-induced activation of AKT and p38 MAP kinase in endothelial cells (By similarity). Also inhibits VTN (vitronectin)-mediated integrin ITGAV:ITGB3 signaling and activation of PTK2/FAK (By similarity). May play a role in the maturation and maintenance of the blood-brain barrier (PubMed:14603461).</text>
</comment>
<comment type="subunit">
    <text evidence="7 8">Homodimer in cis (PubMed:18366072). Does not appear to form trans-homodimers (PubMed:18366072). Interacts with ITGB3; the interaction inhibits ITGAV:ITGB3 heterodimer formation (PubMed:22492581).</text>
</comment>
<comment type="subcellular location">
    <subcellularLocation>
        <location evidence="6 7 8">Cell membrane</location>
        <topology evidence="3">Single-pass type I membrane protein</topology>
    </subcellularLocation>
    <subcellularLocation>
        <location evidence="7">Cell junction</location>
        <location evidence="7">Tight junction</location>
    </subcellularLocation>
    <subcellularLocation>
        <location evidence="7 9">Cytoplasm</location>
    </subcellularLocation>
    <subcellularLocation>
        <location evidence="9">Cell projection</location>
        <location evidence="9">Cilium membrane</location>
    </subcellularLocation>
    <subcellularLocation>
        <location evidence="7">Nucleus</location>
    </subcellularLocation>
    <text evidence="7 9">Primarily localizes to the cell membrane (PubMed:18366072). Detected in the cilium of primary chondrocytes (PubMed:29702220). Highly expressed at areas of cell-cell contact and may localize to tight junctions (PubMed:18366072). Also found in the nucleus where it is detected in the soluble (as opposed to chromatin-bound) fraction (PubMed:18366072).</text>
</comment>
<comment type="tissue specificity">
    <text evidence="6 7 8">Widely expressed (at protein level) (PubMed:18366072). Highly expressed in brain where it localizes to the glia limitans, which is formed by the endfeet of astrocytes surrounding capillaries, and beneath the pia mater (at protein level) (PubMed:14603461). In lung, detected in epithelial cells of the bronchus (at protein level). Expressed in intercalated disks in the heart (at protein level) (PubMed:18366072). Detected in pancreatic alpha-cells in the islet of Langerhans (at protein level) (PubMed:18366072). In kidney, found in the brush border of the proximal convoluted tubule (at protein level) (PubMed:18366072). Expressed in the epithelium of the small intestine (at protein level) (PubMed:18366072). Weakly expressed in liver (at protein level) (PubMed:18366072). Detected in myeloid cells (PubMed:22492581).</text>
</comment>
<comment type="developmental stage">
    <text evidence="8 9">At embryonic stage 15.5 dpc, expressed in the growth plate of long bones where it is mostly found in chondrocytes in the resting and proliferative zones (at protein level) (PubMed:29702220). Expression gradually increases in differentiating osteoclasts, but then decreases during the late stages of differentiation (PubMed:22492581).</text>
</comment>
<comment type="induction">
    <text evidence="6 9">Disruption of the blood-brain barrier by cold injury results in a drastic reduction in expression (PubMed:14603461). Up-regulated in primary chondrocytes in response to BMP2 and PTHLH/PTHrP (PubMed:29702220).</text>
</comment>
<comment type="domain">
    <text evidence="7">RGD motif 2 (but not RGD motif 1) is involved in integrin ITGAV:ITGB3 binding.</text>
</comment>
<protein>
    <recommendedName>
        <fullName evidence="15">Matrix remodeling-associated protein 8</fullName>
    </recommendedName>
    <alternativeName>
        <fullName evidence="14">Adipocyte-specific protein 3</fullName>
    </alternativeName>
    <alternativeName>
        <fullName evidence="11">Dual Ig domain-containing cell adhesion molecule</fullName>
        <shortName evidence="11">DICAM</shortName>
    </alternativeName>
    <alternativeName>
        <fullName evidence="10">Limitrin</fullName>
    </alternativeName>
</protein>